<organism>
    <name type="scientific">Mus musculus</name>
    <name type="common">Mouse</name>
    <dbReference type="NCBI Taxonomy" id="10090"/>
    <lineage>
        <taxon>Eukaryota</taxon>
        <taxon>Metazoa</taxon>
        <taxon>Chordata</taxon>
        <taxon>Craniata</taxon>
        <taxon>Vertebrata</taxon>
        <taxon>Euteleostomi</taxon>
        <taxon>Mammalia</taxon>
        <taxon>Eutheria</taxon>
        <taxon>Euarchontoglires</taxon>
        <taxon>Glires</taxon>
        <taxon>Rodentia</taxon>
        <taxon>Myomorpha</taxon>
        <taxon>Muroidea</taxon>
        <taxon>Muridae</taxon>
        <taxon>Murinae</taxon>
        <taxon>Mus</taxon>
        <taxon>Mus</taxon>
    </lineage>
</organism>
<reference key="1">
    <citation type="journal article" date="1997" name="EMBO J.">
        <title>Metabolic inactivation of retinoic acid by a novel P450 differentially expressed in developing mouse embryos.</title>
        <authorList>
            <person name="Fujii H."/>
            <person name="Sato T."/>
            <person name="Kaneko S."/>
            <person name="Gotoh O."/>
            <person name="Fujii-Kuriyama Y."/>
            <person name="Osawa K."/>
            <person name="Kato S."/>
            <person name="Hamada H."/>
        </authorList>
    </citation>
    <scope>NUCLEOTIDE SEQUENCE [MRNA]</scope>
    <scope>FUNCTION</scope>
    <scope>CATALYTIC ACTIVITY</scope>
    <scope>INDUCTION</scope>
    <source>
        <strain>C3H/HeJ</strain>
    </source>
</reference>
<reference key="2">
    <citation type="journal article" date="1998" name="J. Biol. Chem.">
        <title>Mouse P450RAI (CYP26) expression and retinoic acid-inducible retinoic acid metabolism in F9 cells are regulated by retinoic acid receptor gamma and retinoid X receptor alpha.</title>
        <authorList>
            <person name="Abu-Abed S.S."/>
            <person name="Beckett B.R."/>
            <person name="Chiba H."/>
            <person name="Chithalen J.V."/>
            <person name="Jones G."/>
            <person name="Metzger D."/>
            <person name="Chambon P."/>
            <person name="Petkovich M."/>
        </authorList>
    </citation>
    <scope>NUCLEOTIDE SEQUENCE [MRNA]</scope>
    <scope>FUNCTION</scope>
    <scope>CATALYTIC ACTIVITY</scope>
    <scope>INDUCTION</scope>
</reference>
<reference key="3">
    <citation type="journal article" date="1998" name="Connect. Tissue Res.">
        <title>Identification of tuftelin- and amelogenin-interacting proteins using the yeast two-hybrid system.</title>
        <authorList>
            <person name="Paine C.T."/>
            <person name="Paine M.L."/>
            <person name="Snead M.L."/>
        </authorList>
    </citation>
    <scope>NUCLEOTIDE SEQUENCE [MRNA]</scope>
    <source>
        <tissue>Tooth</tissue>
    </source>
</reference>
<reference key="4">
    <citation type="journal article" date="2004" name="Genome Res.">
        <title>The status, quality, and expansion of the NIH full-length cDNA project: the Mammalian Gene Collection (MGC).</title>
        <authorList>
            <consortium name="The MGC Project Team"/>
        </authorList>
    </citation>
    <scope>NUCLEOTIDE SEQUENCE [LARGE SCALE MRNA]</scope>
    <source>
        <tissue>Liver</tissue>
    </source>
</reference>
<reference key="5">
    <citation type="journal article" date="2005" name="J. Biol. Chem.">
        <title>Metabolism and transactivation activity of 13,14-dihydroretinoic acid.</title>
        <authorList>
            <person name="Moise A.R."/>
            <person name="Kuksa V."/>
            <person name="Blaner W.S."/>
            <person name="Baehr W."/>
            <person name="Palczewski K."/>
        </authorList>
    </citation>
    <scope>FUNCTION</scope>
    <scope>CATALYTIC ACTIVITY</scope>
</reference>
<accession>O55127</accession>
<accession>Q9R1F4</accession>
<evidence type="ECO:0000250" key="1"/>
<evidence type="ECO:0000250" key="2">
    <source>
        <dbReference type="UniProtKB" id="O43174"/>
    </source>
</evidence>
<evidence type="ECO:0000255" key="3"/>
<evidence type="ECO:0000269" key="4">
    <source>
    </source>
</evidence>
<evidence type="ECO:0000269" key="5">
    <source>
    </source>
</evidence>
<evidence type="ECO:0000269" key="6">
    <source>
    </source>
</evidence>
<evidence type="ECO:0000303" key="7">
    <source>
    </source>
</evidence>
<evidence type="ECO:0000303" key="8">
    <source>
    </source>
</evidence>
<evidence type="ECO:0000305" key="9"/>
<evidence type="ECO:0000305" key="10">
    <source>
    </source>
</evidence>
<evidence type="ECO:0000305" key="11">
    <source>
    </source>
</evidence>
<evidence type="ECO:0000305" key="12">
    <source>
    </source>
</evidence>
<evidence type="ECO:0000312" key="13">
    <source>
        <dbReference type="MGI" id="MGI:1096359"/>
    </source>
</evidence>
<name>CP26A_MOUSE</name>
<sequence length="497" mass="56178">MGLPALLASALCTFVLPLLLFLAALKLWDLYCVSSRDRSCALPLPPGTMGFPFFGETLQMVLQRRKFLQMKRRKYGFIYKTHLFGRPTVRVMGADNVRRILLGEHRLVSVHWPASVRTILGAGCLSNLHDSSHKQRKKVIMQAFSREALQCYVLVIAEEVSSCLEQWLSCGERGLLVYPEVKRLMFRIAMRILLGCEPGPAGGGEDEQQLVEAFEEMTRNLFSLPIDVPFSGLYRGVKARNLIHARIEENIRAKIRRLQATEPDGGCKDALQLLIEHSWERGERLDMQALKQSSTELLFGGHETTASAATSLITYLGLYPHVLQKVREEIKSKGLLCKSNQDNKLDMETLEQLKYIGCVIKETLRLNPPVPGGFRVALKTFELNGYQIPKGWNVIYSICDTHDVADIFTNKEEFNPDRFIVPHPEDASRFSFIPFGGGLRSCVGKEFAKILLKIFTVELARHCDWQLLNGPPTMKTSPTVYPVDNLPARFTYFQGDI</sequence>
<proteinExistence type="evidence at protein level"/>
<feature type="chain" id="PRO_0000051981" description="Cytochrome P450 26A1">
    <location>
        <begin position="1"/>
        <end position="497"/>
    </location>
</feature>
<feature type="binding site" description="axial binding residue" evidence="3">
    <location>
        <position position="442"/>
    </location>
    <ligand>
        <name>heme</name>
        <dbReference type="ChEBI" id="CHEBI:30413"/>
    </ligand>
    <ligandPart>
        <name>Fe</name>
        <dbReference type="ChEBI" id="CHEBI:18248"/>
    </ligandPart>
</feature>
<feature type="sequence conflict" description="In Ref. 3; AAD17217." evidence="9" ref="3">
    <original>S</original>
    <variation>T</variation>
    <location>
        <position position="9"/>
    </location>
</feature>
<feature type="sequence conflict" description="In Ref. 4; AAH12673." evidence="9" ref="4">
    <original>L</original>
    <variation>P</variation>
    <location>
        <position position="154"/>
    </location>
</feature>
<feature type="sequence conflict" description="In Ref. 4; AAH12673." evidence="9" ref="4">
    <original>I</original>
    <variation>T</variation>
    <location>
        <position position="356"/>
    </location>
</feature>
<feature type="sequence conflict" description="In Ref. 4; AAH12673." evidence="9" ref="4">
    <original>Y</original>
    <variation>H</variation>
    <location>
        <position position="492"/>
    </location>
</feature>
<dbReference type="EC" id="1.14.13.-" evidence="5 6 10"/>
<dbReference type="EMBL" id="Y12657">
    <property type="protein sequence ID" value="CAA73206.1"/>
    <property type="molecule type" value="mRNA"/>
</dbReference>
<dbReference type="EMBL" id="AF115769">
    <property type="protein sequence ID" value="AAD17217.1"/>
    <property type="molecule type" value="mRNA"/>
</dbReference>
<dbReference type="EMBL" id="BC012673">
    <property type="protein sequence ID" value="AAH12673.1"/>
    <property type="molecule type" value="mRNA"/>
</dbReference>
<dbReference type="CCDS" id="CCDS29780.1"/>
<dbReference type="RefSeq" id="NP_031837.2">
    <property type="nucleotide sequence ID" value="NM_007811.2"/>
</dbReference>
<dbReference type="SMR" id="O55127"/>
<dbReference type="FunCoup" id="O55127">
    <property type="interactions" value="133"/>
</dbReference>
<dbReference type="STRING" id="10090.ENSMUSP00000025946"/>
<dbReference type="iPTMnet" id="O55127"/>
<dbReference type="PhosphoSitePlus" id="O55127"/>
<dbReference type="jPOST" id="O55127"/>
<dbReference type="PaxDb" id="10090-ENSMUSP00000025946"/>
<dbReference type="ProteomicsDB" id="283439"/>
<dbReference type="GeneID" id="13082"/>
<dbReference type="KEGG" id="mmu:13082"/>
<dbReference type="UCSC" id="uc008his.2">
    <property type="organism name" value="mouse"/>
</dbReference>
<dbReference type="AGR" id="MGI:1096359"/>
<dbReference type="CTD" id="1592"/>
<dbReference type="MGI" id="MGI:1096359">
    <property type="gene designation" value="Cyp26a1"/>
</dbReference>
<dbReference type="eggNOG" id="KOG0157">
    <property type="taxonomic scope" value="Eukaryota"/>
</dbReference>
<dbReference type="InParanoid" id="O55127"/>
<dbReference type="OrthoDB" id="1372046at2759"/>
<dbReference type="PhylomeDB" id="O55127"/>
<dbReference type="TreeFam" id="TF105093"/>
<dbReference type="Reactome" id="R-MMU-211916">
    <property type="pathway name" value="Vitamins"/>
</dbReference>
<dbReference type="Reactome" id="R-MMU-5365859">
    <property type="pathway name" value="RA biosynthesis pathway"/>
</dbReference>
<dbReference type="BioGRID-ORCS" id="13082">
    <property type="hits" value="6 hits in 83 CRISPR screens"/>
</dbReference>
<dbReference type="PRO" id="PR:O55127"/>
<dbReference type="Proteomes" id="UP000000589">
    <property type="component" value="Unplaced"/>
</dbReference>
<dbReference type="RNAct" id="O55127">
    <property type="molecule type" value="protein"/>
</dbReference>
<dbReference type="GO" id="GO:0005789">
    <property type="term" value="C:endoplasmic reticulum membrane"/>
    <property type="evidence" value="ECO:0007669"/>
    <property type="project" value="UniProtKB-SubCell"/>
</dbReference>
<dbReference type="GO" id="GO:0062183">
    <property type="term" value="F:all-trans retinoic acid 18-hydroxylase activity"/>
    <property type="evidence" value="ECO:0007669"/>
    <property type="project" value="RHEA"/>
</dbReference>
<dbReference type="GO" id="GO:0062182">
    <property type="term" value="F:all-trans retinoic acid 4-hydrolase activity"/>
    <property type="evidence" value="ECO:0007669"/>
    <property type="project" value="RHEA"/>
</dbReference>
<dbReference type="GO" id="GO:0020037">
    <property type="term" value="F:heme binding"/>
    <property type="evidence" value="ECO:0007669"/>
    <property type="project" value="InterPro"/>
</dbReference>
<dbReference type="GO" id="GO:0005506">
    <property type="term" value="F:iron ion binding"/>
    <property type="evidence" value="ECO:0007669"/>
    <property type="project" value="InterPro"/>
</dbReference>
<dbReference type="GO" id="GO:0016709">
    <property type="term" value="F:oxidoreductase activity, acting on paired donors, with incorporation or reduction of molecular oxygen, NAD(P)H as one donor, and incorporation of one atom of oxygen"/>
    <property type="evidence" value="ECO:0000250"/>
    <property type="project" value="UniProtKB"/>
</dbReference>
<dbReference type="GO" id="GO:0008401">
    <property type="term" value="F:retinoic acid 4-hydroxylase activity"/>
    <property type="evidence" value="ECO:0000314"/>
    <property type="project" value="UniProtKB"/>
</dbReference>
<dbReference type="GO" id="GO:0009952">
    <property type="term" value="P:anterior/posterior pattern specification"/>
    <property type="evidence" value="ECO:0000315"/>
    <property type="project" value="MGI"/>
</dbReference>
<dbReference type="GO" id="GO:0071300">
    <property type="term" value="P:cellular response to retinoic acid"/>
    <property type="evidence" value="ECO:0000270"/>
    <property type="project" value="UniProtKB"/>
</dbReference>
<dbReference type="GO" id="GO:0007417">
    <property type="term" value="P:central nervous system development"/>
    <property type="evidence" value="ECO:0000315"/>
    <property type="project" value="MGI"/>
</dbReference>
<dbReference type="GO" id="GO:0014032">
    <property type="term" value="P:neural crest cell development"/>
    <property type="evidence" value="ECO:0000316"/>
    <property type="project" value="MGI"/>
</dbReference>
<dbReference type="GO" id="GO:0034653">
    <property type="term" value="P:retinoic acid catabolic process"/>
    <property type="evidence" value="ECO:0000314"/>
    <property type="project" value="MGI"/>
</dbReference>
<dbReference type="GO" id="GO:0042573">
    <property type="term" value="P:retinoic acid metabolic process"/>
    <property type="evidence" value="ECO:0000314"/>
    <property type="project" value="UniProtKB"/>
</dbReference>
<dbReference type="GO" id="GO:0048384">
    <property type="term" value="P:retinoic acid receptor signaling pathway"/>
    <property type="evidence" value="ECO:0000314"/>
    <property type="project" value="MGI"/>
</dbReference>
<dbReference type="GO" id="GO:0006805">
    <property type="term" value="P:xenobiotic metabolic process"/>
    <property type="evidence" value="ECO:0000250"/>
    <property type="project" value="UniProtKB"/>
</dbReference>
<dbReference type="CDD" id="cd20638">
    <property type="entry name" value="CYP26A1"/>
    <property type="match status" value="1"/>
</dbReference>
<dbReference type="FunFam" id="1.10.630.10:FF:000041">
    <property type="entry name" value="Cytochrome P450 26A1 isoform 1"/>
    <property type="match status" value="1"/>
</dbReference>
<dbReference type="Gene3D" id="1.10.630.10">
    <property type="entry name" value="Cytochrome P450"/>
    <property type="match status" value="1"/>
</dbReference>
<dbReference type="InterPro" id="IPR001128">
    <property type="entry name" value="Cyt_P450"/>
</dbReference>
<dbReference type="InterPro" id="IPR017972">
    <property type="entry name" value="Cyt_P450_CS"/>
</dbReference>
<dbReference type="InterPro" id="IPR002403">
    <property type="entry name" value="Cyt_P450_E_grp-IV"/>
</dbReference>
<dbReference type="InterPro" id="IPR036396">
    <property type="entry name" value="Cyt_P450_sf"/>
</dbReference>
<dbReference type="PANTHER" id="PTHR24286">
    <property type="entry name" value="CYTOCHROME P450 26"/>
    <property type="match status" value="1"/>
</dbReference>
<dbReference type="PANTHER" id="PTHR24286:SF101">
    <property type="entry name" value="CYTOCHROME P450 26A1"/>
    <property type="match status" value="1"/>
</dbReference>
<dbReference type="Pfam" id="PF00067">
    <property type="entry name" value="p450"/>
    <property type="match status" value="1"/>
</dbReference>
<dbReference type="PRINTS" id="PR00465">
    <property type="entry name" value="EP450IV"/>
</dbReference>
<dbReference type="PRINTS" id="PR00385">
    <property type="entry name" value="P450"/>
</dbReference>
<dbReference type="SUPFAM" id="SSF48264">
    <property type="entry name" value="Cytochrome P450"/>
    <property type="match status" value="1"/>
</dbReference>
<dbReference type="PROSITE" id="PS00086">
    <property type="entry name" value="CYTOCHROME_P450"/>
    <property type="match status" value="1"/>
</dbReference>
<keyword id="KW-0256">Endoplasmic reticulum</keyword>
<keyword id="KW-0349">Heme</keyword>
<keyword id="KW-0408">Iron</keyword>
<keyword id="KW-0443">Lipid metabolism</keyword>
<keyword id="KW-0472">Membrane</keyword>
<keyword id="KW-0479">Metal-binding</keyword>
<keyword id="KW-0492">Microsome</keyword>
<keyword id="KW-0503">Monooxygenase</keyword>
<keyword id="KW-0560">Oxidoreductase</keyword>
<keyword id="KW-1185">Reference proteome</keyword>
<comment type="function">
    <text evidence="2 4 5 6 10">A cytochrome P450 monooxygenase involved in the metabolism of retinoates (RAs), the active metabolites of vitamin A, and critical signaling molecules in animals (PubMed:15911617, PubMed:9250660, PubMed:9442090). RAs exist as at least four different isomers: all-trans-RA (atRA), 9-cis-RA, 13-cis-RA, and 9,13-dicis-RA, where atRA is considered to be the biologically active isomer, although 9-cis-RA and 13-cis-RA also have activity (By similarity). Catalyzes the hydroxylation of atRA primarily at C-4 and C-18, thereby contributing to the regulation of atRA homeostasis and signaling (PubMed:15911617, PubMed:9250660, PubMed:9442090). Hydroxylation of atRA limits its biological activity and initiates a degradative process leading to its eventual elimination (By similarity). Involved in the convertion of atRA to all-trans-4-oxo-RA (PubMed:15911617). Able to metabolize other RAs such as 9-cis, 13-cis and 9,13-di-cis RA (PubMed:9250660). Can oxidize all-trans-13,14-dihydroretinoate (DRA) to metabolites which could include all-trans-4-oxo-DRA, all-trans-4-hydroxy-DRA, all-trans-5,8-epoxy-DRA, and all-trans-18-hydroxy-DRA (Probable). May play a role in the oxidative metabolism of xenobiotics such as tazarotenic acid (By similarity).</text>
</comment>
<comment type="catalytic activity">
    <reaction evidence="5 6 10">
        <text>all-trans-retinoate + reduced [NADPH--hemoprotein reductase] + O2 = all-trans-(4S)-hydroxyretinoate + oxidized [NADPH--hemoprotein reductase] + H2O + H(+)</text>
        <dbReference type="Rhea" id="RHEA:51492"/>
        <dbReference type="Rhea" id="RHEA-COMP:11964"/>
        <dbReference type="Rhea" id="RHEA-COMP:11965"/>
        <dbReference type="ChEBI" id="CHEBI:15377"/>
        <dbReference type="ChEBI" id="CHEBI:15378"/>
        <dbReference type="ChEBI" id="CHEBI:15379"/>
        <dbReference type="ChEBI" id="CHEBI:35291"/>
        <dbReference type="ChEBI" id="CHEBI:57618"/>
        <dbReference type="ChEBI" id="CHEBI:58210"/>
        <dbReference type="ChEBI" id="CHEBI:134185"/>
    </reaction>
    <physiologicalReaction direction="left-to-right" evidence="10 11 12">
        <dbReference type="Rhea" id="RHEA:51493"/>
    </physiologicalReaction>
</comment>
<comment type="catalytic activity">
    <reaction evidence="2">
        <text>all-trans-(4S)-hydroxyretinoate + reduced [NADPH--hemoprotein reductase] + O2 = all-trans-(4S,16)-dihydroxyretinoate + oxidized [NADPH--hemoprotein reductase] + H2O + H(+)</text>
        <dbReference type="Rhea" id="RHEA:51632"/>
        <dbReference type="Rhea" id="RHEA-COMP:11964"/>
        <dbReference type="Rhea" id="RHEA-COMP:11965"/>
        <dbReference type="ChEBI" id="CHEBI:15377"/>
        <dbReference type="ChEBI" id="CHEBI:15378"/>
        <dbReference type="ChEBI" id="CHEBI:15379"/>
        <dbReference type="ChEBI" id="CHEBI:57618"/>
        <dbReference type="ChEBI" id="CHEBI:58210"/>
        <dbReference type="ChEBI" id="CHEBI:134185"/>
        <dbReference type="ChEBI" id="CHEBI:134233"/>
    </reaction>
    <physiologicalReaction direction="left-to-right" evidence="2">
        <dbReference type="Rhea" id="RHEA:51633"/>
    </physiologicalReaction>
</comment>
<comment type="catalytic activity">
    <reaction evidence="6 10">
        <text>all-trans-retinoate + reduced [NADPH--hemoprotein reductase] + O2 = all-trans-18-hydroxyretinoate + oxidized [NADPH--hemoprotein reductase] + H2O + H(+)</text>
        <dbReference type="Rhea" id="RHEA:55856"/>
        <dbReference type="Rhea" id="RHEA-COMP:11964"/>
        <dbReference type="Rhea" id="RHEA-COMP:11965"/>
        <dbReference type="ChEBI" id="CHEBI:15377"/>
        <dbReference type="ChEBI" id="CHEBI:15378"/>
        <dbReference type="ChEBI" id="CHEBI:15379"/>
        <dbReference type="ChEBI" id="CHEBI:35291"/>
        <dbReference type="ChEBI" id="CHEBI:57618"/>
        <dbReference type="ChEBI" id="CHEBI:58210"/>
        <dbReference type="ChEBI" id="CHEBI:139258"/>
    </reaction>
    <physiologicalReaction direction="left-to-right" evidence="10 12">
        <dbReference type="Rhea" id="RHEA:55857"/>
    </physiologicalReaction>
</comment>
<comment type="cofactor">
    <cofactor evidence="1">
        <name>heme</name>
        <dbReference type="ChEBI" id="CHEBI:30413"/>
    </cofactor>
</comment>
<comment type="subcellular location">
    <subcellularLocation>
        <location evidence="2">Endoplasmic reticulum membrane</location>
        <topology>Peripheral membrane protein</topology>
    </subcellularLocation>
    <subcellularLocation>
        <location evidence="2">Microsome membrane</location>
        <topology>Peripheral membrane protein</topology>
    </subcellularLocation>
</comment>
<comment type="induction">
    <text evidence="5 6">By retinoic acid.</text>
</comment>
<comment type="similarity">
    <text evidence="9">Belongs to the cytochrome P450 family.</text>
</comment>
<protein>
    <recommendedName>
        <fullName>Cytochrome P450 26A1</fullName>
        <shortName evidence="7">CYP26A1</shortName>
        <ecNumber evidence="5 6 10">1.14.13.-</ecNumber>
    </recommendedName>
    <alternativeName>
        <fullName evidence="8">Cytochrome P450RAI</fullName>
    </alternativeName>
    <alternativeName>
        <fullName evidence="8">Retinoic acid 4-hydroxylase</fullName>
    </alternativeName>
    <alternativeName>
        <fullName evidence="8">Retinoic acid-metabolizing cytochrome</fullName>
    </alternativeName>
</protein>
<gene>
    <name evidence="13" type="primary">Cyp26a1</name>
    <name type="synonym">Cyp26</name>
    <name type="synonym">P450ra</name>
</gene>